<organism>
    <name type="scientific">Yersinia pseudotuberculosis serotype I (strain IP32953)</name>
    <dbReference type="NCBI Taxonomy" id="273123"/>
    <lineage>
        <taxon>Bacteria</taxon>
        <taxon>Pseudomonadati</taxon>
        <taxon>Pseudomonadota</taxon>
        <taxon>Gammaproteobacteria</taxon>
        <taxon>Enterobacterales</taxon>
        <taxon>Yersiniaceae</taxon>
        <taxon>Yersinia</taxon>
    </lineage>
</organism>
<reference key="1">
    <citation type="journal article" date="2004" name="Proc. Natl. Acad. Sci. U.S.A.">
        <title>Insights into the evolution of Yersinia pestis through whole-genome comparison with Yersinia pseudotuberculosis.</title>
        <authorList>
            <person name="Chain P.S.G."/>
            <person name="Carniel E."/>
            <person name="Larimer F.W."/>
            <person name="Lamerdin J."/>
            <person name="Stoutland P.O."/>
            <person name="Regala W.M."/>
            <person name="Georgescu A.M."/>
            <person name="Vergez L.M."/>
            <person name="Land M.L."/>
            <person name="Motin V.L."/>
            <person name="Brubaker R.R."/>
            <person name="Fowler J."/>
            <person name="Hinnebusch J."/>
            <person name="Marceau M."/>
            <person name="Medigue C."/>
            <person name="Simonet M."/>
            <person name="Chenal-Francisque V."/>
            <person name="Souza B."/>
            <person name="Dacheux D."/>
            <person name="Elliott J.M."/>
            <person name="Derbise A."/>
            <person name="Hauser L.J."/>
            <person name="Garcia E."/>
        </authorList>
    </citation>
    <scope>NUCLEOTIDE SEQUENCE [LARGE SCALE GENOMIC DNA]</scope>
    <source>
        <strain>IP32953</strain>
    </source>
</reference>
<gene>
    <name evidence="1" type="primary">trpR</name>
    <name type="ordered locus">YPTB0596</name>
</gene>
<protein>
    <recommendedName>
        <fullName evidence="1">Trp operon repressor</fullName>
    </recommendedName>
</protein>
<comment type="function">
    <text evidence="1">This protein is an aporepressor. When complexed with L-tryptophan it binds the operator region of the trp operon (5'-ACTAGT-'3') and prevents the initiation of transcription. The complex also regulates trp repressor biosynthesis by binding to its regulatory region.</text>
</comment>
<comment type="subunit">
    <text evidence="1">Homodimer.</text>
</comment>
<comment type="subcellular location">
    <subcellularLocation>
        <location evidence="1">Cytoplasm</location>
    </subcellularLocation>
</comment>
<comment type="similarity">
    <text evidence="1">Belongs to the TrpR family.</text>
</comment>
<name>TRPR_YERPS</name>
<proteinExistence type="inferred from homology"/>
<sequence>MTDEKQVSDSLNRQTAGNPYSAADPALSAEDNQHWLSFVALLQNAITQDLHLPLLQLMLTPDERTALGTRVRIIEELMRGELSQRELKSQLGAGIATITRGSNSLKTAPPQLKSWLEAQLLANKR</sequence>
<accession>Q66EU5</accession>
<evidence type="ECO:0000255" key="1">
    <source>
        <dbReference type="HAMAP-Rule" id="MF_00475"/>
    </source>
</evidence>
<evidence type="ECO:0000256" key="2">
    <source>
        <dbReference type="SAM" id="MobiDB-lite"/>
    </source>
</evidence>
<dbReference type="EMBL" id="BX936398">
    <property type="protein sequence ID" value="CAH19836.1"/>
    <property type="molecule type" value="Genomic_DNA"/>
</dbReference>
<dbReference type="SMR" id="Q66EU5"/>
<dbReference type="KEGG" id="yps:YPTB0596"/>
<dbReference type="Proteomes" id="UP000001011">
    <property type="component" value="Chromosome"/>
</dbReference>
<dbReference type="GO" id="GO:0005737">
    <property type="term" value="C:cytoplasm"/>
    <property type="evidence" value="ECO:0007669"/>
    <property type="project" value="UniProtKB-SubCell"/>
</dbReference>
<dbReference type="GO" id="GO:0003700">
    <property type="term" value="F:DNA-binding transcription factor activity"/>
    <property type="evidence" value="ECO:0007669"/>
    <property type="project" value="InterPro"/>
</dbReference>
<dbReference type="GO" id="GO:0043565">
    <property type="term" value="F:sequence-specific DNA binding"/>
    <property type="evidence" value="ECO:0007669"/>
    <property type="project" value="InterPro"/>
</dbReference>
<dbReference type="GO" id="GO:0045892">
    <property type="term" value="P:negative regulation of DNA-templated transcription"/>
    <property type="evidence" value="ECO:0007669"/>
    <property type="project" value="UniProtKB-UniRule"/>
</dbReference>
<dbReference type="FunFam" id="1.10.1270.10:FF:000001">
    <property type="entry name" value="Trp operon repressor"/>
    <property type="match status" value="1"/>
</dbReference>
<dbReference type="Gene3D" id="1.10.1270.10">
    <property type="entry name" value="TrpR-like"/>
    <property type="match status" value="1"/>
</dbReference>
<dbReference type="HAMAP" id="MF_00475">
    <property type="entry name" value="Trp_repressor"/>
    <property type="match status" value="1"/>
</dbReference>
<dbReference type="InterPro" id="IPR000831">
    <property type="entry name" value="Trp_repress"/>
</dbReference>
<dbReference type="InterPro" id="IPR013335">
    <property type="entry name" value="Trp_repress_bac"/>
</dbReference>
<dbReference type="InterPro" id="IPR010921">
    <property type="entry name" value="Trp_repressor/repl_initiator"/>
</dbReference>
<dbReference type="InterPro" id="IPR038116">
    <property type="entry name" value="TrpR-like_sf"/>
</dbReference>
<dbReference type="NCBIfam" id="TIGR01321">
    <property type="entry name" value="TrpR"/>
    <property type="match status" value="1"/>
</dbReference>
<dbReference type="PANTHER" id="PTHR38025">
    <property type="entry name" value="TRP OPERON REPRESSOR"/>
    <property type="match status" value="1"/>
</dbReference>
<dbReference type="PANTHER" id="PTHR38025:SF1">
    <property type="entry name" value="TRP OPERON REPRESSOR"/>
    <property type="match status" value="1"/>
</dbReference>
<dbReference type="Pfam" id="PF01371">
    <property type="entry name" value="Trp_repressor"/>
    <property type="match status" value="1"/>
</dbReference>
<dbReference type="SUPFAM" id="SSF48295">
    <property type="entry name" value="TrpR-like"/>
    <property type="match status" value="1"/>
</dbReference>
<keyword id="KW-0963">Cytoplasm</keyword>
<keyword id="KW-0238">DNA-binding</keyword>
<keyword id="KW-0678">Repressor</keyword>
<keyword id="KW-0804">Transcription</keyword>
<keyword id="KW-0805">Transcription regulation</keyword>
<feature type="chain" id="PRO_0000196506" description="Trp operon repressor">
    <location>
        <begin position="1"/>
        <end position="125"/>
    </location>
</feature>
<feature type="DNA-binding region" evidence="1">
    <location>
        <begin position="84"/>
        <end position="107"/>
    </location>
</feature>
<feature type="region of interest" description="Disordered" evidence="2">
    <location>
        <begin position="1"/>
        <end position="25"/>
    </location>
</feature>
<feature type="compositionally biased region" description="Polar residues" evidence="2">
    <location>
        <begin position="8"/>
        <end position="18"/>
    </location>
</feature>